<feature type="chain" id="PRO_1000084460" description="Replication restart protein DnaT">
    <location>
        <begin position="1"/>
        <end position="179"/>
    </location>
</feature>
<feature type="region of interest" description="Disordered" evidence="2">
    <location>
        <begin position="156"/>
        <end position="179"/>
    </location>
</feature>
<dbReference type="EMBL" id="CP000946">
    <property type="protein sequence ID" value="ACA79304.1"/>
    <property type="molecule type" value="Genomic_DNA"/>
</dbReference>
<dbReference type="RefSeq" id="WP_000098830.1">
    <property type="nucleotide sequence ID" value="NZ_MTFT01000024.1"/>
</dbReference>
<dbReference type="BMRB" id="B1IS56"/>
<dbReference type="SMR" id="B1IS56"/>
<dbReference type="KEGG" id="ecl:EcolC_3693"/>
<dbReference type="HOGENOM" id="CLU_1501592_0_0_6"/>
<dbReference type="GO" id="GO:1990077">
    <property type="term" value="C:primosome complex"/>
    <property type="evidence" value="ECO:0007669"/>
    <property type="project" value="UniProtKB-KW"/>
</dbReference>
<dbReference type="GO" id="GO:0006269">
    <property type="term" value="P:DNA replication, synthesis of primer"/>
    <property type="evidence" value="ECO:0007669"/>
    <property type="project" value="UniProtKB-UniRule"/>
</dbReference>
<dbReference type="FunFam" id="1.10.8.1180:FF:000001">
    <property type="entry name" value="Primosomal protein 1"/>
    <property type="match status" value="1"/>
</dbReference>
<dbReference type="Gene3D" id="1.10.8.1180">
    <property type="match status" value="1"/>
</dbReference>
<dbReference type="HAMAP" id="MF_01061">
    <property type="entry name" value="DnaT"/>
    <property type="match status" value="1"/>
</dbReference>
<dbReference type="InterPro" id="IPR020917">
    <property type="entry name" value="DnaT"/>
</dbReference>
<dbReference type="InterPro" id="IPR040480">
    <property type="entry name" value="DnaT_DNA_bind"/>
</dbReference>
<dbReference type="NCBIfam" id="NF002770">
    <property type="entry name" value="PRK02854.1"/>
    <property type="match status" value="1"/>
</dbReference>
<dbReference type="Pfam" id="PF17948">
    <property type="entry name" value="DnaT"/>
    <property type="match status" value="1"/>
</dbReference>
<comment type="function">
    <text evidence="1">Involved in the restart of stalled replication forks, which reloads the replicative helicase on sites other than the origin of replication. Can function in multiple replication restart pathways. Displaces ssDNA from a PriB-ssDNA complex. Probably forms a spiral filament on ssDNA.</text>
</comment>
<comment type="subunit">
    <text evidence="1">Homooligomerizes. Interacts with PriB. Component of the replication restart primosome. Primosome assembly occurs via a 'hand-off' mechanism. PriA binds to replication forks, subsequently PriB then DnaT bind; DnaT then displaces ssDNA to generate the helicase loading substrate.</text>
</comment>
<comment type="similarity">
    <text evidence="1">Belongs to the DnaT family.</text>
</comment>
<reference key="1">
    <citation type="submission" date="2008-02" db="EMBL/GenBank/DDBJ databases">
        <title>Complete sequence of Escherichia coli C str. ATCC 8739.</title>
        <authorList>
            <person name="Copeland A."/>
            <person name="Lucas S."/>
            <person name="Lapidus A."/>
            <person name="Glavina del Rio T."/>
            <person name="Dalin E."/>
            <person name="Tice H."/>
            <person name="Bruce D."/>
            <person name="Goodwin L."/>
            <person name="Pitluck S."/>
            <person name="Kiss H."/>
            <person name="Brettin T."/>
            <person name="Detter J.C."/>
            <person name="Han C."/>
            <person name="Kuske C.R."/>
            <person name="Schmutz J."/>
            <person name="Larimer F."/>
            <person name="Land M."/>
            <person name="Hauser L."/>
            <person name="Kyrpides N."/>
            <person name="Mikhailova N."/>
            <person name="Ingram L."/>
            <person name="Richardson P."/>
        </authorList>
    </citation>
    <scope>NUCLEOTIDE SEQUENCE [LARGE SCALE GENOMIC DNA]</scope>
    <source>
        <strain>ATCC 8739 / DSM 1576 / NBRC 3972 / NCIMB 8545 / WDCM 00012 / Crooks</strain>
    </source>
</reference>
<gene>
    <name evidence="1" type="primary">dnaT</name>
    <name type="ordered locus">EcolC_3693</name>
</gene>
<evidence type="ECO:0000255" key="1">
    <source>
        <dbReference type="HAMAP-Rule" id="MF_01061"/>
    </source>
</evidence>
<evidence type="ECO:0000256" key="2">
    <source>
        <dbReference type="SAM" id="MobiDB-lite"/>
    </source>
</evidence>
<organism>
    <name type="scientific">Escherichia coli (strain ATCC 8739 / DSM 1576 / NBRC 3972 / NCIMB 8545 / WDCM 00012 / Crooks)</name>
    <dbReference type="NCBI Taxonomy" id="481805"/>
    <lineage>
        <taxon>Bacteria</taxon>
        <taxon>Pseudomonadati</taxon>
        <taxon>Pseudomonadota</taxon>
        <taxon>Gammaproteobacteria</taxon>
        <taxon>Enterobacterales</taxon>
        <taxon>Enterobacteriaceae</taxon>
        <taxon>Escherichia</taxon>
    </lineage>
</organism>
<accession>B1IS56</accession>
<sequence length="179" mass="19446">MSSRVLTPDVVGIDALVQDHQTVLAKAEGGVVAVFANNAPAFYAVTPARLAELLALEEKLARPGSDVALDDQLYQEPQAAPVAVPMGKFAMYPDWQPDADFIRLAALWGVALREPVTTEELASFIAYWQAEGKVFHHVQWQQKLARSLQIGRASNGGLPKRDVNTVSEPDSQIPPGFRG</sequence>
<protein>
    <recommendedName>
        <fullName evidence="1">Replication restart protein DnaT</fullName>
    </recommendedName>
</protein>
<name>DNAT_ECOLC</name>
<proteinExistence type="inferred from homology"/>
<keyword id="KW-0235">DNA replication</keyword>
<keyword id="KW-0238">DNA-binding</keyword>
<keyword id="KW-0639">Primosome</keyword>